<gene>
    <name evidence="1" type="primary">rps24e</name>
    <name type="ordered locus">AF_1114</name>
</gene>
<reference key="1">
    <citation type="journal article" date="1997" name="Nature">
        <title>The complete genome sequence of the hyperthermophilic, sulphate-reducing archaeon Archaeoglobus fulgidus.</title>
        <authorList>
            <person name="Klenk H.-P."/>
            <person name="Clayton R.A."/>
            <person name="Tomb J.-F."/>
            <person name="White O."/>
            <person name="Nelson K.E."/>
            <person name="Ketchum K.A."/>
            <person name="Dodson R.J."/>
            <person name="Gwinn M.L."/>
            <person name="Hickey E.K."/>
            <person name="Peterson J.D."/>
            <person name="Richardson D.L."/>
            <person name="Kerlavage A.R."/>
            <person name="Graham D.E."/>
            <person name="Kyrpides N.C."/>
            <person name="Fleischmann R.D."/>
            <person name="Quackenbush J."/>
            <person name="Lee N.H."/>
            <person name="Sutton G.G."/>
            <person name="Gill S.R."/>
            <person name="Kirkness E.F."/>
            <person name="Dougherty B.A."/>
            <person name="McKenney K."/>
            <person name="Adams M.D."/>
            <person name="Loftus B.J."/>
            <person name="Peterson S.N."/>
            <person name="Reich C.I."/>
            <person name="McNeil L.K."/>
            <person name="Badger J.H."/>
            <person name="Glodek A."/>
            <person name="Zhou L."/>
            <person name="Overbeek R."/>
            <person name="Gocayne J.D."/>
            <person name="Weidman J.F."/>
            <person name="McDonald L.A."/>
            <person name="Utterback T.R."/>
            <person name="Cotton M.D."/>
            <person name="Spriggs T."/>
            <person name="Artiach P."/>
            <person name="Kaine B.P."/>
            <person name="Sykes S.M."/>
            <person name="Sadow P.W."/>
            <person name="D'Andrea K.P."/>
            <person name="Bowman C."/>
            <person name="Fujii C."/>
            <person name="Garland S.A."/>
            <person name="Mason T.M."/>
            <person name="Olsen G.J."/>
            <person name="Fraser C.M."/>
            <person name="Smith H.O."/>
            <person name="Woese C.R."/>
            <person name="Venter J.C."/>
        </authorList>
    </citation>
    <scope>NUCLEOTIDE SEQUENCE [LARGE SCALE GENOMIC DNA]</scope>
    <source>
        <strain>ATCC 49558 / DSM 4304 / JCM 9628 / NBRC 100126 / VC-16</strain>
    </source>
</reference>
<protein>
    <recommendedName>
        <fullName evidence="1">Small ribosomal subunit protein eS24</fullName>
    </recommendedName>
    <alternativeName>
        <fullName evidence="3">30S ribosomal protein S24e</fullName>
    </alternativeName>
</protein>
<proteinExistence type="inferred from homology"/>
<feature type="chain" id="PRO_0000137639" description="Small ribosomal subunit protein eS24">
    <location>
        <begin position="1"/>
        <end position="110"/>
    </location>
</feature>
<feature type="region of interest" description="Disordered" evidence="2">
    <location>
        <begin position="91"/>
        <end position="110"/>
    </location>
</feature>
<feature type="compositionally biased region" description="Acidic residues" evidence="2">
    <location>
        <begin position="97"/>
        <end position="110"/>
    </location>
</feature>
<organism>
    <name type="scientific">Archaeoglobus fulgidus (strain ATCC 49558 / DSM 4304 / JCM 9628 / NBRC 100126 / VC-16)</name>
    <dbReference type="NCBI Taxonomy" id="224325"/>
    <lineage>
        <taxon>Archaea</taxon>
        <taxon>Methanobacteriati</taxon>
        <taxon>Methanobacteriota</taxon>
        <taxon>Archaeoglobi</taxon>
        <taxon>Archaeoglobales</taxon>
        <taxon>Archaeoglobaceae</taxon>
        <taxon>Archaeoglobus</taxon>
    </lineage>
</organism>
<accession>O29151</accession>
<name>RS24_ARCFU</name>
<sequence length="110" mass="12844">MIDLEVYVEKERHNPLLRRREVYCRLSFEGKTPSRKEVRGKIAGLMNAEPERVVVDYIKTEFGKTEAKCYVKIYDTVEDLQKIEEEHIIERNKVEEQAEEAEEAEAGAAE</sequence>
<comment type="similarity">
    <text evidence="1">Belongs to the eukaryotic ribosomal protein eS24 family.</text>
</comment>
<evidence type="ECO:0000255" key="1">
    <source>
        <dbReference type="HAMAP-Rule" id="MF_00545"/>
    </source>
</evidence>
<evidence type="ECO:0000256" key="2">
    <source>
        <dbReference type="SAM" id="MobiDB-lite"/>
    </source>
</evidence>
<evidence type="ECO:0000305" key="3"/>
<keyword id="KW-1185">Reference proteome</keyword>
<keyword id="KW-0687">Ribonucleoprotein</keyword>
<keyword id="KW-0689">Ribosomal protein</keyword>
<dbReference type="EMBL" id="AE000782">
    <property type="protein sequence ID" value="AAB90128.1"/>
    <property type="molecule type" value="Genomic_DNA"/>
</dbReference>
<dbReference type="PIR" id="A69389">
    <property type="entry name" value="A69389"/>
</dbReference>
<dbReference type="SMR" id="O29151"/>
<dbReference type="STRING" id="224325.AF_1114"/>
<dbReference type="PaxDb" id="224325-AF_1114"/>
<dbReference type="EnsemblBacteria" id="AAB90128">
    <property type="protein sequence ID" value="AAB90128"/>
    <property type="gene ID" value="AF_1114"/>
</dbReference>
<dbReference type="KEGG" id="afu:AF_1114"/>
<dbReference type="eggNOG" id="arCOG04182">
    <property type="taxonomic scope" value="Archaea"/>
</dbReference>
<dbReference type="HOGENOM" id="CLU_107248_3_1_2"/>
<dbReference type="OrthoDB" id="27533at2157"/>
<dbReference type="PhylomeDB" id="O29151"/>
<dbReference type="Proteomes" id="UP000002199">
    <property type="component" value="Chromosome"/>
</dbReference>
<dbReference type="GO" id="GO:1990904">
    <property type="term" value="C:ribonucleoprotein complex"/>
    <property type="evidence" value="ECO:0007669"/>
    <property type="project" value="UniProtKB-KW"/>
</dbReference>
<dbReference type="GO" id="GO:0005840">
    <property type="term" value="C:ribosome"/>
    <property type="evidence" value="ECO:0007669"/>
    <property type="project" value="UniProtKB-KW"/>
</dbReference>
<dbReference type="GO" id="GO:0003735">
    <property type="term" value="F:structural constituent of ribosome"/>
    <property type="evidence" value="ECO:0007669"/>
    <property type="project" value="InterPro"/>
</dbReference>
<dbReference type="GO" id="GO:0006412">
    <property type="term" value="P:translation"/>
    <property type="evidence" value="ECO:0007669"/>
    <property type="project" value="UniProtKB-UniRule"/>
</dbReference>
<dbReference type="Gene3D" id="3.30.70.3370">
    <property type="match status" value="1"/>
</dbReference>
<dbReference type="HAMAP" id="MF_00545">
    <property type="entry name" value="Ribosomal_eS24"/>
    <property type="match status" value="1"/>
</dbReference>
<dbReference type="InterPro" id="IPR053709">
    <property type="entry name" value="eRP_eS24_sf"/>
</dbReference>
<dbReference type="InterPro" id="IPR001976">
    <property type="entry name" value="Ribosomal_eS24"/>
</dbReference>
<dbReference type="InterPro" id="IPR018098">
    <property type="entry name" value="Ribosomal_eS24_CS"/>
</dbReference>
<dbReference type="InterPro" id="IPR012678">
    <property type="entry name" value="Ribosomal_uL23/eL15/eS24_sf"/>
</dbReference>
<dbReference type="PANTHER" id="PTHR10496">
    <property type="entry name" value="40S RIBOSOMAL PROTEIN S24"/>
    <property type="match status" value="1"/>
</dbReference>
<dbReference type="Pfam" id="PF01282">
    <property type="entry name" value="Ribosomal_S24e"/>
    <property type="match status" value="1"/>
</dbReference>
<dbReference type="SUPFAM" id="SSF54189">
    <property type="entry name" value="Ribosomal proteins S24e, L23 and L15e"/>
    <property type="match status" value="1"/>
</dbReference>
<dbReference type="PROSITE" id="PS00529">
    <property type="entry name" value="RIBOSOMAL_S24E"/>
    <property type="match status" value="1"/>
</dbReference>